<reference key="1">
    <citation type="submission" date="2006-05" db="EMBL/GenBank/DDBJ databases">
        <title>Complete sequence of chromosome of Silicibacter sp. TM1040.</title>
        <authorList>
            <consortium name="US DOE Joint Genome Institute"/>
            <person name="Copeland A."/>
            <person name="Lucas S."/>
            <person name="Lapidus A."/>
            <person name="Barry K."/>
            <person name="Detter J.C."/>
            <person name="Glavina del Rio T."/>
            <person name="Hammon N."/>
            <person name="Israni S."/>
            <person name="Dalin E."/>
            <person name="Tice H."/>
            <person name="Pitluck S."/>
            <person name="Brettin T."/>
            <person name="Bruce D."/>
            <person name="Han C."/>
            <person name="Tapia R."/>
            <person name="Goodwin L."/>
            <person name="Thompson L.S."/>
            <person name="Gilna P."/>
            <person name="Schmutz J."/>
            <person name="Larimer F."/>
            <person name="Land M."/>
            <person name="Hauser L."/>
            <person name="Kyrpides N."/>
            <person name="Kim E."/>
            <person name="Belas R."/>
            <person name="Moran M.A."/>
            <person name="Buchan A."/>
            <person name="Gonzalez J.M."/>
            <person name="Schell M.A."/>
            <person name="Sun F."/>
            <person name="Richardson P."/>
        </authorList>
    </citation>
    <scope>NUCLEOTIDE SEQUENCE [LARGE SCALE GENOMIC DNA]</scope>
    <source>
        <strain>TM1040</strain>
    </source>
</reference>
<name>GPMI_RUEST</name>
<feature type="chain" id="PRO_1000064010" description="2,3-bisphosphoglycerate-independent phosphoglycerate mutase">
    <location>
        <begin position="1"/>
        <end position="506"/>
    </location>
</feature>
<feature type="active site" description="Phosphoserine intermediate" evidence="1">
    <location>
        <position position="63"/>
    </location>
</feature>
<feature type="binding site" evidence="1">
    <location>
        <position position="13"/>
    </location>
    <ligand>
        <name>Mn(2+)</name>
        <dbReference type="ChEBI" id="CHEBI:29035"/>
        <label>2</label>
    </ligand>
</feature>
<feature type="binding site" evidence="1">
    <location>
        <position position="63"/>
    </location>
    <ligand>
        <name>Mn(2+)</name>
        <dbReference type="ChEBI" id="CHEBI:29035"/>
        <label>2</label>
    </ligand>
</feature>
<feature type="binding site" evidence="1">
    <location>
        <position position="124"/>
    </location>
    <ligand>
        <name>substrate</name>
    </ligand>
</feature>
<feature type="binding site" evidence="1">
    <location>
        <begin position="153"/>
        <end position="154"/>
    </location>
    <ligand>
        <name>substrate</name>
    </ligand>
</feature>
<feature type="binding site" evidence="1">
    <location>
        <position position="183"/>
    </location>
    <ligand>
        <name>substrate</name>
    </ligand>
</feature>
<feature type="binding site" evidence="1">
    <location>
        <position position="189"/>
    </location>
    <ligand>
        <name>substrate</name>
    </ligand>
</feature>
<feature type="binding site" evidence="1">
    <location>
        <begin position="255"/>
        <end position="258"/>
    </location>
    <ligand>
        <name>substrate</name>
    </ligand>
</feature>
<feature type="binding site" evidence="1">
    <location>
        <position position="331"/>
    </location>
    <ligand>
        <name>substrate</name>
    </ligand>
</feature>
<feature type="binding site" evidence="1">
    <location>
        <position position="397"/>
    </location>
    <ligand>
        <name>Mn(2+)</name>
        <dbReference type="ChEBI" id="CHEBI:29035"/>
        <label>1</label>
    </ligand>
</feature>
<feature type="binding site" evidence="1">
    <location>
        <position position="401"/>
    </location>
    <ligand>
        <name>Mn(2+)</name>
        <dbReference type="ChEBI" id="CHEBI:29035"/>
        <label>1</label>
    </ligand>
</feature>
<feature type="binding site" evidence="1">
    <location>
        <position position="438"/>
    </location>
    <ligand>
        <name>Mn(2+)</name>
        <dbReference type="ChEBI" id="CHEBI:29035"/>
        <label>2</label>
    </ligand>
</feature>
<feature type="binding site" evidence="1">
    <location>
        <position position="439"/>
    </location>
    <ligand>
        <name>Mn(2+)</name>
        <dbReference type="ChEBI" id="CHEBI:29035"/>
        <label>2</label>
    </ligand>
</feature>
<feature type="binding site" evidence="1">
    <location>
        <position position="457"/>
    </location>
    <ligand>
        <name>Mn(2+)</name>
        <dbReference type="ChEBI" id="CHEBI:29035"/>
        <label>1</label>
    </ligand>
</feature>
<sequence length="506" mass="53564">MTTPKPVVLCILDGWGSAEPGPANAPYLAKTPTLDAIMQSCPTARLVTHGPDVGLPSGQMGNSEVGHTNIGAGRVVAMDLGQIDLAIEDGSFYDNDALQAFIAKLKETGGAAHLMGLVSDGGVHGHVTHILAAIKAIRDAGVPVWLHAITDGRDVAPKSALTYLDQLEAGMAPGAQIATVTGRYFAMDRDNRWERVSEAYDAMVKGAGQFTAATARDAVENAYGRDELDEFVKATVVEGFDGIKEGDGFFCLNFRADRAREILRAIGEPGFAEFDTGPRPALAALLGMVEYSEGHNAYMTTAYPKRAIVNTLGEWVAKQGKRQFRLAETEKYPHVTFFLNGGKETPEVGEDRFMPKSPKVATYDLQPEMSAPEVTAKFVEAIRAGYDLIVTNYANPDMVGHTGDLDAAIKACEAVDQGLGEVVAALKDAGGAMIVTADHGNCELMVDPETGGAHTAHTTNLVPVALVGGPEGTALKDGRLADLAPTLLALMGLDQPEEMTGESLLV</sequence>
<proteinExistence type="inferred from homology"/>
<dbReference type="EC" id="5.4.2.12" evidence="1"/>
<dbReference type="EMBL" id="CP000377">
    <property type="protein sequence ID" value="ABF65489.1"/>
    <property type="molecule type" value="Genomic_DNA"/>
</dbReference>
<dbReference type="RefSeq" id="WP_011540071.1">
    <property type="nucleotide sequence ID" value="NC_008044.1"/>
</dbReference>
<dbReference type="SMR" id="Q1GCX7"/>
<dbReference type="STRING" id="292414.TM1040_2757"/>
<dbReference type="KEGG" id="sit:TM1040_2757"/>
<dbReference type="eggNOG" id="COG0696">
    <property type="taxonomic scope" value="Bacteria"/>
</dbReference>
<dbReference type="HOGENOM" id="CLU_026099_2_0_5"/>
<dbReference type="OrthoDB" id="9800863at2"/>
<dbReference type="UniPathway" id="UPA00109">
    <property type="reaction ID" value="UER00186"/>
</dbReference>
<dbReference type="Proteomes" id="UP000000636">
    <property type="component" value="Chromosome"/>
</dbReference>
<dbReference type="GO" id="GO:0005829">
    <property type="term" value="C:cytosol"/>
    <property type="evidence" value="ECO:0007669"/>
    <property type="project" value="TreeGrafter"/>
</dbReference>
<dbReference type="GO" id="GO:0030145">
    <property type="term" value="F:manganese ion binding"/>
    <property type="evidence" value="ECO:0007669"/>
    <property type="project" value="UniProtKB-UniRule"/>
</dbReference>
<dbReference type="GO" id="GO:0004619">
    <property type="term" value="F:phosphoglycerate mutase activity"/>
    <property type="evidence" value="ECO:0007669"/>
    <property type="project" value="UniProtKB-EC"/>
</dbReference>
<dbReference type="GO" id="GO:0006007">
    <property type="term" value="P:glucose catabolic process"/>
    <property type="evidence" value="ECO:0007669"/>
    <property type="project" value="InterPro"/>
</dbReference>
<dbReference type="GO" id="GO:0006096">
    <property type="term" value="P:glycolytic process"/>
    <property type="evidence" value="ECO:0007669"/>
    <property type="project" value="UniProtKB-UniRule"/>
</dbReference>
<dbReference type="CDD" id="cd16010">
    <property type="entry name" value="iPGM"/>
    <property type="match status" value="1"/>
</dbReference>
<dbReference type="FunFam" id="3.40.1450.10:FF:000002">
    <property type="entry name" value="2,3-bisphosphoglycerate-independent phosphoglycerate mutase"/>
    <property type="match status" value="1"/>
</dbReference>
<dbReference type="Gene3D" id="3.40.720.10">
    <property type="entry name" value="Alkaline Phosphatase, subunit A"/>
    <property type="match status" value="1"/>
</dbReference>
<dbReference type="Gene3D" id="3.40.1450.10">
    <property type="entry name" value="BPG-independent phosphoglycerate mutase, domain B"/>
    <property type="match status" value="1"/>
</dbReference>
<dbReference type="HAMAP" id="MF_01038">
    <property type="entry name" value="GpmI"/>
    <property type="match status" value="1"/>
</dbReference>
<dbReference type="InterPro" id="IPR017850">
    <property type="entry name" value="Alkaline_phosphatase_core_sf"/>
</dbReference>
<dbReference type="InterPro" id="IPR011258">
    <property type="entry name" value="BPG-indep_PGM_N"/>
</dbReference>
<dbReference type="InterPro" id="IPR006124">
    <property type="entry name" value="Metalloenzyme"/>
</dbReference>
<dbReference type="InterPro" id="IPR036646">
    <property type="entry name" value="PGAM_B_sf"/>
</dbReference>
<dbReference type="InterPro" id="IPR005995">
    <property type="entry name" value="Pgm_bpd_ind"/>
</dbReference>
<dbReference type="NCBIfam" id="TIGR01307">
    <property type="entry name" value="pgm_bpd_ind"/>
    <property type="match status" value="1"/>
</dbReference>
<dbReference type="PANTHER" id="PTHR31637">
    <property type="entry name" value="2,3-BISPHOSPHOGLYCERATE-INDEPENDENT PHOSPHOGLYCERATE MUTASE"/>
    <property type="match status" value="1"/>
</dbReference>
<dbReference type="PANTHER" id="PTHR31637:SF0">
    <property type="entry name" value="2,3-BISPHOSPHOGLYCERATE-INDEPENDENT PHOSPHOGLYCERATE MUTASE"/>
    <property type="match status" value="1"/>
</dbReference>
<dbReference type="Pfam" id="PF06415">
    <property type="entry name" value="iPGM_N"/>
    <property type="match status" value="1"/>
</dbReference>
<dbReference type="Pfam" id="PF01676">
    <property type="entry name" value="Metalloenzyme"/>
    <property type="match status" value="1"/>
</dbReference>
<dbReference type="PIRSF" id="PIRSF001492">
    <property type="entry name" value="IPGAM"/>
    <property type="match status" value="1"/>
</dbReference>
<dbReference type="SUPFAM" id="SSF64158">
    <property type="entry name" value="2,3-Bisphosphoglycerate-independent phosphoglycerate mutase, substrate-binding domain"/>
    <property type="match status" value="1"/>
</dbReference>
<dbReference type="SUPFAM" id="SSF53649">
    <property type="entry name" value="Alkaline phosphatase-like"/>
    <property type="match status" value="1"/>
</dbReference>
<evidence type="ECO:0000255" key="1">
    <source>
        <dbReference type="HAMAP-Rule" id="MF_01038"/>
    </source>
</evidence>
<accession>Q1GCX7</accession>
<keyword id="KW-0324">Glycolysis</keyword>
<keyword id="KW-0413">Isomerase</keyword>
<keyword id="KW-0464">Manganese</keyword>
<keyword id="KW-0479">Metal-binding</keyword>
<keyword id="KW-1185">Reference proteome</keyword>
<gene>
    <name evidence="1" type="primary">gpmI</name>
    <name type="ordered locus">TM1040_2757</name>
</gene>
<organism>
    <name type="scientific">Ruegeria sp. (strain TM1040)</name>
    <name type="common">Silicibacter sp.</name>
    <dbReference type="NCBI Taxonomy" id="292414"/>
    <lineage>
        <taxon>Bacteria</taxon>
        <taxon>Pseudomonadati</taxon>
        <taxon>Pseudomonadota</taxon>
        <taxon>Alphaproteobacteria</taxon>
        <taxon>Rhodobacterales</taxon>
        <taxon>Roseobacteraceae</taxon>
        <taxon>Ruegeria</taxon>
    </lineage>
</organism>
<protein>
    <recommendedName>
        <fullName evidence="1">2,3-bisphosphoglycerate-independent phosphoglycerate mutase</fullName>
        <shortName evidence="1">BPG-independent PGAM</shortName>
        <shortName evidence="1">Phosphoglyceromutase</shortName>
        <shortName evidence="1">iPGM</shortName>
        <ecNumber evidence="1">5.4.2.12</ecNumber>
    </recommendedName>
</protein>
<comment type="function">
    <text evidence="1">Catalyzes the interconversion of 2-phosphoglycerate and 3-phosphoglycerate.</text>
</comment>
<comment type="catalytic activity">
    <reaction evidence="1">
        <text>(2R)-2-phosphoglycerate = (2R)-3-phosphoglycerate</text>
        <dbReference type="Rhea" id="RHEA:15901"/>
        <dbReference type="ChEBI" id="CHEBI:58272"/>
        <dbReference type="ChEBI" id="CHEBI:58289"/>
        <dbReference type="EC" id="5.4.2.12"/>
    </reaction>
</comment>
<comment type="cofactor">
    <cofactor evidence="1">
        <name>Mn(2+)</name>
        <dbReference type="ChEBI" id="CHEBI:29035"/>
    </cofactor>
    <text evidence="1">Binds 2 manganese ions per subunit.</text>
</comment>
<comment type="pathway">
    <text evidence="1">Carbohydrate degradation; glycolysis; pyruvate from D-glyceraldehyde 3-phosphate: step 3/5.</text>
</comment>
<comment type="subunit">
    <text evidence="1">Monomer.</text>
</comment>
<comment type="similarity">
    <text evidence="1">Belongs to the BPG-independent phosphoglycerate mutase family.</text>
</comment>